<protein>
    <recommendedName>
        <fullName evidence="2">Small ribosomal subunit protein uS12</fullName>
    </recommendedName>
    <alternativeName>
        <fullName evidence="3">30S ribosomal protein S12</fullName>
    </alternativeName>
</protein>
<proteinExistence type="inferred from homology"/>
<keyword id="KW-0488">Methylation</keyword>
<keyword id="KW-0687">Ribonucleoprotein</keyword>
<keyword id="KW-0689">Ribosomal protein</keyword>
<keyword id="KW-0694">RNA-binding</keyword>
<keyword id="KW-0699">rRNA-binding</keyword>
<keyword id="KW-0820">tRNA-binding</keyword>
<sequence>MPTISQLVRKGRKTIASASDSPALKECPQKRGVCTVVKTTTPKKPNSALRKVARIRLTNGYEVTAYIPGVGHNLQEHSVVLIRGGRVKDLPGVRYHIVRGALDAAGVANRMQSRSKYGAKKPKQK</sequence>
<dbReference type="EMBL" id="CP001083">
    <property type="protein sequence ID" value="ACQ51482.1"/>
    <property type="molecule type" value="Genomic_DNA"/>
</dbReference>
<dbReference type="RefSeq" id="WP_003357676.1">
    <property type="nucleotide sequence ID" value="NC_012658.1"/>
</dbReference>
<dbReference type="SMR" id="C3KVQ6"/>
<dbReference type="GeneID" id="92940255"/>
<dbReference type="KEGG" id="cbi:CLJ_B3794"/>
<dbReference type="HOGENOM" id="CLU_104295_1_2_9"/>
<dbReference type="Proteomes" id="UP000002333">
    <property type="component" value="Chromosome"/>
</dbReference>
<dbReference type="GO" id="GO:0015935">
    <property type="term" value="C:small ribosomal subunit"/>
    <property type="evidence" value="ECO:0007669"/>
    <property type="project" value="InterPro"/>
</dbReference>
<dbReference type="GO" id="GO:0019843">
    <property type="term" value="F:rRNA binding"/>
    <property type="evidence" value="ECO:0007669"/>
    <property type="project" value="UniProtKB-UniRule"/>
</dbReference>
<dbReference type="GO" id="GO:0003735">
    <property type="term" value="F:structural constituent of ribosome"/>
    <property type="evidence" value="ECO:0007669"/>
    <property type="project" value="InterPro"/>
</dbReference>
<dbReference type="GO" id="GO:0000049">
    <property type="term" value="F:tRNA binding"/>
    <property type="evidence" value="ECO:0007669"/>
    <property type="project" value="UniProtKB-UniRule"/>
</dbReference>
<dbReference type="GO" id="GO:0006412">
    <property type="term" value="P:translation"/>
    <property type="evidence" value="ECO:0007669"/>
    <property type="project" value="UniProtKB-UniRule"/>
</dbReference>
<dbReference type="CDD" id="cd03368">
    <property type="entry name" value="Ribosomal_S12"/>
    <property type="match status" value="1"/>
</dbReference>
<dbReference type="FunFam" id="2.40.50.140:FF:000001">
    <property type="entry name" value="30S ribosomal protein S12"/>
    <property type="match status" value="1"/>
</dbReference>
<dbReference type="Gene3D" id="2.40.50.140">
    <property type="entry name" value="Nucleic acid-binding proteins"/>
    <property type="match status" value="1"/>
</dbReference>
<dbReference type="HAMAP" id="MF_00403_B">
    <property type="entry name" value="Ribosomal_uS12_B"/>
    <property type="match status" value="1"/>
</dbReference>
<dbReference type="InterPro" id="IPR012340">
    <property type="entry name" value="NA-bd_OB-fold"/>
</dbReference>
<dbReference type="InterPro" id="IPR006032">
    <property type="entry name" value="Ribosomal_uS12"/>
</dbReference>
<dbReference type="InterPro" id="IPR005679">
    <property type="entry name" value="Ribosomal_uS12_bac"/>
</dbReference>
<dbReference type="NCBIfam" id="TIGR00981">
    <property type="entry name" value="rpsL_bact"/>
    <property type="match status" value="1"/>
</dbReference>
<dbReference type="PANTHER" id="PTHR11652">
    <property type="entry name" value="30S RIBOSOMAL PROTEIN S12 FAMILY MEMBER"/>
    <property type="match status" value="1"/>
</dbReference>
<dbReference type="Pfam" id="PF00164">
    <property type="entry name" value="Ribosom_S12_S23"/>
    <property type="match status" value="1"/>
</dbReference>
<dbReference type="PIRSF" id="PIRSF002133">
    <property type="entry name" value="Ribosomal_S12/S23"/>
    <property type="match status" value="1"/>
</dbReference>
<dbReference type="PRINTS" id="PR01034">
    <property type="entry name" value="RIBOSOMALS12"/>
</dbReference>
<dbReference type="SUPFAM" id="SSF50249">
    <property type="entry name" value="Nucleic acid-binding proteins"/>
    <property type="match status" value="1"/>
</dbReference>
<dbReference type="PROSITE" id="PS00055">
    <property type="entry name" value="RIBOSOMAL_S12"/>
    <property type="match status" value="1"/>
</dbReference>
<gene>
    <name evidence="2" type="primary">rpsL</name>
    <name type="ordered locus">CLJ_B3794</name>
</gene>
<evidence type="ECO:0000250" key="1"/>
<evidence type="ECO:0000255" key="2">
    <source>
        <dbReference type="HAMAP-Rule" id="MF_00403"/>
    </source>
</evidence>
<evidence type="ECO:0000305" key="3"/>
<accession>C3KVQ6</accession>
<feature type="chain" id="PRO_1000205907" description="Small ribosomal subunit protein uS12">
    <location>
        <begin position="1"/>
        <end position="125"/>
    </location>
</feature>
<feature type="modified residue" description="3-methylthioaspartic acid" evidence="1">
    <location>
        <position position="89"/>
    </location>
</feature>
<reference key="1">
    <citation type="submission" date="2008-05" db="EMBL/GenBank/DDBJ databases">
        <title>Genome sequence of Clostridium botulinum Ba4 strain 657.</title>
        <authorList>
            <person name="Shrivastava S."/>
            <person name="Brown J.L."/>
            <person name="Bruce D."/>
            <person name="Detter C."/>
            <person name="Munk C."/>
            <person name="Smith L.A."/>
            <person name="Smith T.J."/>
            <person name="Sutton G."/>
            <person name="Brettin T.S."/>
        </authorList>
    </citation>
    <scope>NUCLEOTIDE SEQUENCE [LARGE SCALE GENOMIC DNA]</scope>
    <source>
        <strain>657 / Type Ba4</strain>
    </source>
</reference>
<comment type="function">
    <text evidence="2">With S4 and S5 plays an important role in translational accuracy.</text>
</comment>
<comment type="function">
    <text evidence="2">Interacts with and stabilizes bases of the 16S rRNA that are involved in tRNA selection in the A site and with the mRNA backbone. Located at the interface of the 30S and 50S subunits, it traverses the body of the 30S subunit contacting proteins on the other side and probably holding the rRNA structure together. The combined cluster of proteins S8, S12 and S17 appears to hold together the shoulder and platform of the 30S subunit.</text>
</comment>
<comment type="subunit">
    <text evidence="2">Part of the 30S ribosomal subunit. Contacts proteins S8 and S17. May interact with IF1 in the 30S initiation complex.</text>
</comment>
<comment type="similarity">
    <text evidence="2">Belongs to the universal ribosomal protein uS12 family.</text>
</comment>
<name>RS12_CLOB6</name>
<organism>
    <name type="scientific">Clostridium botulinum (strain 657 / Type Ba4)</name>
    <dbReference type="NCBI Taxonomy" id="515621"/>
    <lineage>
        <taxon>Bacteria</taxon>
        <taxon>Bacillati</taxon>
        <taxon>Bacillota</taxon>
        <taxon>Clostridia</taxon>
        <taxon>Eubacteriales</taxon>
        <taxon>Clostridiaceae</taxon>
        <taxon>Clostridium</taxon>
    </lineage>
</organism>